<protein>
    <recommendedName>
        <fullName>Kelch-like protein 20</fullName>
    </recommendedName>
</protein>
<evidence type="ECO:0000250" key="1"/>
<evidence type="ECO:0000250" key="2">
    <source>
        <dbReference type="UniProtKB" id="Q9Y2M5"/>
    </source>
</evidence>
<evidence type="ECO:0000255" key="3">
    <source>
        <dbReference type="PROSITE-ProRule" id="PRU00037"/>
    </source>
</evidence>
<evidence type="ECO:0000269" key="4">
    <source>
    </source>
</evidence>
<comment type="function">
    <text evidence="2">Substrate-specific adapter of a BCR (BTB-CUL3-RBX1) E3 ubiquitin-protein ligase complex involved in interferon response and anterograde Golgi to endosome transport. The BCR(KLHL20) E3 ubiquitin ligase complex mediates the ubiquitination of DAPK1, leading to its degradation by the proteasome, thereby acting as a negative regulator of apoptosis. The BCR(KLHL20) E3 ubiquitin ligase complex also specifically mediates 'Lys-33'-linked ubiquitination. Involved in anterograde Golgi to endosome transport by mediating 'Lys-33'-linked ubiquitination of CORO7, promoting interaction between CORO7 and EPS15, thereby facilitating actin polymerization and post-Golgi trafficking. Also acts as a regulator of endothelial migration during angiogenesis by controlling the activation of Rho GTPases. The BCR(KLHL20) E3 ubiquitin ligase complex acts as a regulator of neurite outgrowth by mediating ubiquitination and degradation of PDZ-RhoGEF/ARHGEF11 (By similarity).</text>
</comment>
<comment type="pathway">
    <text>Protein modification; protein ubiquitination.</text>
</comment>
<comment type="subunit">
    <text evidence="2">Component of the BCR(KLHL20) E3 ubiquitin ligase complex, at least composed of CUL3, KLHL20 and RBX1. Interacts with PDZ-RhoGEF/ARHGEF11, DAPK1, PML and CORO7. Interacts with F-actin. Interacts with IFN-gamma (IFNG) (By similarity). Interacts (via kelch repeats) with IVNS1ABP (via kelch repeats); this interaction blocks the assembly of CUL3-KLHL20 complex (By similarity).</text>
</comment>
<comment type="subcellular location">
    <subcellularLocation>
        <location evidence="1">Cytoplasm</location>
        <location evidence="1">Perinuclear region</location>
    </subcellularLocation>
    <subcellularLocation>
        <location evidence="1">Nucleus</location>
    </subcellularLocation>
    <subcellularLocation>
        <location evidence="1">Golgi apparatus</location>
        <location evidence="1">trans-Golgi network</location>
    </subcellularLocation>
    <subcellularLocation>
        <location evidence="4">Cell projection</location>
        <location evidence="4">Axon</location>
    </subcellularLocation>
    <subcellularLocation>
        <location evidence="4">Cell projection</location>
        <location evidence="4">Dendrite</location>
    </subcellularLocation>
    <text evidence="1">Localizes in the perinuclear region in normal conditions. Following IFN-alpha or IFN-gamma treatment, it is relocalized and sequestrated to the PML nuclear bodies, preventing DAPK1 ubiquitination (By similarity).</text>
</comment>
<accession>D3Z8N4</accession>
<proteinExistence type="inferred from homology"/>
<gene>
    <name type="primary">Klhl20</name>
</gene>
<dbReference type="EMBL" id="CH473958">
    <property type="protein sequence ID" value="EDM09422.1"/>
    <property type="molecule type" value="Genomic_DNA"/>
</dbReference>
<dbReference type="RefSeq" id="NP_001100662.1">
    <property type="nucleotide sequence ID" value="NM_001107192.2"/>
</dbReference>
<dbReference type="RefSeq" id="XP_006250174.1">
    <property type="nucleotide sequence ID" value="XM_006250112.3"/>
</dbReference>
<dbReference type="SMR" id="D3Z8N4"/>
<dbReference type="FunCoup" id="D3Z8N4">
    <property type="interactions" value="4146"/>
</dbReference>
<dbReference type="STRING" id="10116.ENSRNOP00000068007"/>
<dbReference type="PhosphoSitePlus" id="D3Z8N4"/>
<dbReference type="PaxDb" id="10116-ENSRNOP00000068007"/>
<dbReference type="Ensembl" id="ENSRNOT00000003851.6">
    <property type="protein sequence ID" value="ENSRNOP00000003851.5"/>
    <property type="gene ID" value="ENSRNOG00000002875.8"/>
</dbReference>
<dbReference type="GeneID" id="304920"/>
<dbReference type="KEGG" id="rno:304920"/>
<dbReference type="UCSC" id="RGD:1309490">
    <property type="organism name" value="rat"/>
</dbReference>
<dbReference type="AGR" id="RGD:1309490"/>
<dbReference type="CTD" id="27252"/>
<dbReference type="RGD" id="1309490">
    <property type="gene designation" value="Klhl20"/>
</dbReference>
<dbReference type="eggNOG" id="KOG4441">
    <property type="taxonomic scope" value="Eukaryota"/>
</dbReference>
<dbReference type="GeneTree" id="ENSGT00940000155161"/>
<dbReference type="HOGENOM" id="CLU_004253_14_2_1"/>
<dbReference type="InParanoid" id="D3Z8N4"/>
<dbReference type="OrthoDB" id="45365at2759"/>
<dbReference type="PhylomeDB" id="D3Z8N4"/>
<dbReference type="TreeFam" id="TF329218"/>
<dbReference type="Reactome" id="R-RNO-8951664">
    <property type="pathway name" value="Neddylation"/>
</dbReference>
<dbReference type="Reactome" id="R-RNO-983168">
    <property type="pathway name" value="Antigen processing: Ubiquitination &amp; Proteasome degradation"/>
</dbReference>
<dbReference type="UniPathway" id="UPA00143"/>
<dbReference type="PRO" id="PR:D3Z8N4"/>
<dbReference type="Proteomes" id="UP000002494">
    <property type="component" value="Chromosome 13"/>
</dbReference>
<dbReference type="Proteomes" id="UP000234681">
    <property type="component" value="Chromosome 13"/>
</dbReference>
<dbReference type="Bgee" id="ENSRNOG00000002875">
    <property type="expression patterns" value="Expressed in thymus and 19 other cell types or tissues"/>
</dbReference>
<dbReference type="GO" id="GO:0030424">
    <property type="term" value="C:axon"/>
    <property type="evidence" value="ECO:0007669"/>
    <property type="project" value="UniProtKB-SubCell"/>
</dbReference>
<dbReference type="GO" id="GO:0031463">
    <property type="term" value="C:Cul3-RING ubiquitin ligase complex"/>
    <property type="evidence" value="ECO:0000250"/>
    <property type="project" value="UniProtKB"/>
</dbReference>
<dbReference type="GO" id="GO:0005737">
    <property type="term" value="C:cytoplasm"/>
    <property type="evidence" value="ECO:0000250"/>
    <property type="project" value="UniProtKB"/>
</dbReference>
<dbReference type="GO" id="GO:0005829">
    <property type="term" value="C:cytosol"/>
    <property type="evidence" value="ECO:0007669"/>
    <property type="project" value="GOC"/>
</dbReference>
<dbReference type="GO" id="GO:0030425">
    <property type="term" value="C:dendrite"/>
    <property type="evidence" value="ECO:0007669"/>
    <property type="project" value="UniProtKB-SubCell"/>
</dbReference>
<dbReference type="GO" id="GO:0048471">
    <property type="term" value="C:perinuclear region of cytoplasm"/>
    <property type="evidence" value="ECO:0007669"/>
    <property type="project" value="UniProtKB-SubCell"/>
</dbReference>
<dbReference type="GO" id="GO:0016605">
    <property type="term" value="C:PML body"/>
    <property type="evidence" value="ECO:0000250"/>
    <property type="project" value="UniProtKB"/>
</dbReference>
<dbReference type="GO" id="GO:0005802">
    <property type="term" value="C:trans-Golgi network"/>
    <property type="evidence" value="ECO:0000250"/>
    <property type="project" value="UniProtKB"/>
</dbReference>
<dbReference type="GO" id="GO:0003779">
    <property type="term" value="F:actin binding"/>
    <property type="evidence" value="ECO:0007669"/>
    <property type="project" value="UniProtKB-KW"/>
</dbReference>
<dbReference type="GO" id="GO:0019964">
    <property type="term" value="F:type II interferon binding"/>
    <property type="evidence" value="ECO:0000250"/>
    <property type="project" value="UniProtKB"/>
</dbReference>
<dbReference type="GO" id="GO:1990756">
    <property type="term" value="F:ubiquitin-like ligase-substrate adaptor activity"/>
    <property type="evidence" value="ECO:0000318"/>
    <property type="project" value="GO_Central"/>
</dbReference>
<dbReference type="GO" id="GO:0004842">
    <property type="term" value="F:ubiquitin-protein transferase activity"/>
    <property type="evidence" value="ECO:0000266"/>
    <property type="project" value="RGD"/>
</dbReference>
<dbReference type="GO" id="GO:0006895">
    <property type="term" value="P:Golgi to endosome transport"/>
    <property type="evidence" value="ECO:0000250"/>
    <property type="project" value="UniProtKB"/>
</dbReference>
<dbReference type="GO" id="GO:0043066">
    <property type="term" value="P:negative regulation of apoptotic process"/>
    <property type="evidence" value="ECO:0000250"/>
    <property type="project" value="UniProtKB"/>
</dbReference>
<dbReference type="GO" id="GO:0043161">
    <property type="term" value="P:proteasome-mediated ubiquitin-dependent protein catabolic process"/>
    <property type="evidence" value="ECO:0000250"/>
    <property type="project" value="UniProtKB"/>
</dbReference>
<dbReference type="GO" id="GO:1990390">
    <property type="term" value="P:protein K33-linked ubiquitination"/>
    <property type="evidence" value="ECO:0000250"/>
    <property type="project" value="UniProtKB"/>
</dbReference>
<dbReference type="GO" id="GO:0015031">
    <property type="term" value="P:protein transport"/>
    <property type="evidence" value="ECO:0007669"/>
    <property type="project" value="UniProtKB-KW"/>
</dbReference>
<dbReference type="GO" id="GO:0016567">
    <property type="term" value="P:protein ubiquitination"/>
    <property type="evidence" value="ECO:0000250"/>
    <property type="project" value="UniProtKB"/>
</dbReference>
<dbReference type="CDD" id="cd18459">
    <property type="entry name" value="BACK_KLHL20"/>
    <property type="match status" value="1"/>
</dbReference>
<dbReference type="CDD" id="cd18249">
    <property type="entry name" value="BTB_POZ_KLHL20_KLEIP"/>
    <property type="match status" value="1"/>
</dbReference>
<dbReference type="FunFam" id="1.25.40.420:FF:000001">
    <property type="entry name" value="Kelch-like family member 12"/>
    <property type="match status" value="1"/>
</dbReference>
<dbReference type="FunFam" id="2.120.10.80:FF:000006">
    <property type="entry name" value="Kelch-like family member 20"/>
    <property type="match status" value="1"/>
</dbReference>
<dbReference type="FunFam" id="3.30.710.10:FF:000001">
    <property type="entry name" value="Kelch-like family member 20"/>
    <property type="match status" value="1"/>
</dbReference>
<dbReference type="Gene3D" id="1.25.40.420">
    <property type="match status" value="1"/>
</dbReference>
<dbReference type="Gene3D" id="2.120.10.80">
    <property type="entry name" value="Kelch-type beta propeller"/>
    <property type="match status" value="1"/>
</dbReference>
<dbReference type="Gene3D" id="3.30.710.10">
    <property type="entry name" value="Potassium Channel Kv1.1, Chain A"/>
    <property type="match status" value="1"/>
</dbReference>
<dbReference type="InterPro" id="IPR011705">
    <property type="entry name" value="BACK"/>
</dbReference>
<dbReference type="InterPro" id="IPR017096">
    <property type="entry name" value="BTB-kelch_protein"/>
</dbReference>
<dbReference type="InterPro" id="IPR000210">
    <property type="entry name" value="BTB/POZ_dom"/>
</dbReference>
<dbReference type="InterPro" id="IPR015915">
    <property type="entry name" value="Kelch-typ_b-propeller"/>
</dbReference>
<dbReference type="InterPro" id="IPR006652">
    <property type="entry name" value="Kelch_1"/>
</dbReference>
<dbReference type="InterPro" id="IPR011333">
    <property type="entry name" value="SKP1/BTB/POZ_sf"/>
</dbReference>
<dbReference type="PANTHER" id="PTHR24412">
    <property type="entry name" value="KELCH PROTEIN"/>
    <property type="match status" value="1"/>
</dbReference>
<dbReference type="PANTHER" id="PTHR24412:SF451">
    <property type="entry name" value="KELCH-LIKE PROTEIN 20"/>
    <property type="match status" value="1"/>
</dbReference>
<dbReference type="Pfam" id="PF07707">
    <property type="entry name" value="BACK"/>
    <property type="match status" value="1"/>
</dbReference>
<dbReference type="Pfam" id="PF00651">
    <property type="entry name" value="BTB"/>
    <property type="match status" value="1"/>
</dbReference>
<dbReference type="Pfam" id="PF01344">
    <property type="entry name" value="Kelch_1"/>
    <property type="match status" value="2"/>
</dbReference>
<dbReference type="Pfam" id="PF24681">
    <property type="entry name" value="Kelch_KLHDC2_KLHL20_DRC7"/>
    <property type="match status" value="1"/>
</dbReference>
<dbReference type="PIRSF" id="PIRSF037037">
    <property type="entry name" value="Kelch-like_protein_gigaxonin"/>
    <property type="match status" value="1"/>
</dbReference>
<dbReference type="PRINTS" id="PR00501">
    <property type="entry name" value="KELCHREPEAT"/>
</dbReference>
<dbReference type="SMART" id="SM00875">
    <property type="entry name" value="BACK"/>
    <property type="match status" value="1"/>
</dbReference>
<dbReference type="SMART" id="SM00225">
    <property type="entry name" value="BTB"/>
    <property type="match status" value="1"/>
</dbReference>
<dbReference type="SMART" id="SM00612">
    <property type="entry name" value="Kelch"/>
    <property type="match status" value="6"/>
</dbReference>
<dbReference type="SUPFAM" id="SSF117281">
    <property type="entry name" value="Kelch motif"/>
    <property type="match status" value="1"/>
</dbReference>
<dbReference type="SUPFAM" id="SSF54695">
    <property type="entry name" value="POZ domain"/>
    <property type="match status" value="1"/>
</dbReference>
<dbReference type="PROSITE" id="PS50097">
    <property type="entry name" value="BTB"/>
    <property type="match status" value="1"/>
</dbReference>
<organism>
    <name type="scientific">Rattus norvegicus</name>
    <name type="common">Rat</name>
    <dbReference type="NCBI Taxonomy" id="10116"/>
    <lineage>
        <taxon>Eukaryota</taxon>
        <taxon>Metazoa</taxon>
        <taxon>Chordata</taxon>
        <taxon>Craniata</taxon>
        <taxon>Vertebrata</taxon>
        <taxon>Euteleostomi</taxon>
        <taxon>Mammalia</taxon>
        <taxon>Eutheria</taxon>
        <taxon>Euarchontoglires</taxon>
        <taxon>Glires</taxon>
        <taxon>Rodentia</taxon>
        <taxon>Myomorpha</taxon>
        <taxon>Muroidea</taxon>
        <taxon>Muridae</taxon>
        <taxon>Murinae</taxon>
        <taxon>Rattus</taxon>
    </lineage>
</organism>
<sequence length="609" mass="67955">MEGKPMRRCTNIRPGETGMDVTSRCTLGDPNKLPEGVPQPARMPYISDKHPRQTLEVINLLRKHRELCDVVLVVGAKKIYAHRVILSACSPYFRAMFTGELAESRQTEVVIRDIDERAMELLIDFAYTSQITVEEGNVQTLLPAACLLQLAEIQEACCEFLKRQLDPSNCLGIRAFADTHSCRELLRIADKFTQHNFQEVMESEEFMLLPANQLIDIISSDELNVRSEEQVFNAVMAWVKYSIQERRPQLPQVLQHVRLPLLSPKFLVGTVGSDPLIKSDEECRDLVDEAKNYLLLPQERPLMQGPRTRPRKPIRCGEVLFAVGGWCSGDAISSVERYDPQTNEWRMVASMSKRRCGVGVSVLDDLLYAVGGHDGSSYLNSVERYDPKTNQWSSDVAPTSTCRTSVGVAVLGGFLYAVGGQDGVSCLNIVERYDPKENKWTRVASMSTRRLGVAVAVLGGFLYAVGGSDGTSPLNTVERYNPQENRWHTIAPMGTRRKHLGCAVYQDMIYAVGGRDDTTELSSAERYNPRTNQWSPVVAMTSRRSGVGLAVVNGQLMAVGGFDGTTYLKTIEVFDPDANTWRLYGGMNYRRLGGGVGVIKMTHCESHIW</sequence>
<reference key="1">
    <citation type="submission" date="2005-09" db="EMBL/GenBank/DDBJ databases">
        <authorList>
            <person name="Mural R.J."/>
            <person name="Adams M.D."/>
            <person name="Myers E.W."/>
            <person name="Smith H.O."/>
            <person name="Venter J.C."/>
        </authorList>
    </citation>
    <scope>NUCLEOTIDE SEQUENCE [LARGE SCALE GENOMIC DNA]</scope>
</reference>
<reference key="2">
    <citation type="journal article" date="2011" name="J. Cell Biol.">
        <title>PDZ-RhoGEF ubiquitination by Cullin3-KLHL20 controls neurotrophin-induced neurite outgrowth.</title>
        <authorList>
            <person name="Lin M.Y."/>
            <person name="Lin Y.M."/>
            <person name="Kao T.C."/>
            <person name="Chuang H.H."/>
            <person name="Chen R.H."/>
        </authorList>
    </citation>
    <scope>SUBCELLULAR LOCATION</scope>
</reference>
<feature type="chain" id="PRO_0000396628" description="Kelch-like protein 20">
    <location>
        <begin position="1"/>
        <end position="609"/>
    </location>
</feature>
<feature type="domain" description="BTB" evidence="3">
    <location>
        <begin position="68"/>
        <end position="135"/>
    </location>
</feature>
<feature type="domain" description="BACK">
    <location>
        <begin position="170"/>
        <end position="272"/>
    </location>
</feature>
<feature type="repeat" description="Kelch 1">
    <location>
        <begin position="319"/>
        <end position="365"/>
    </location>
</feature>
<feature type="repeat" description="Kelch 2">
    <location>
        <begin position="367"/>
        <end position="413"/>
    </location>
</feature>
<feature type="repeat" description="Kelch 3">
    <location>
        <begin position="414"/>
        <end position="460"/>
    </location>
</feature>
<feature type="repeat" description="Kelch 4">
    <location>
        <begin position="462"/>
        <end position="507"/>
    </location>
</feature>
<feature type="repeat" description="Kelch 5">
    <location>
        <begin position="509"/>
        <end position="554"/>
    </location>
</feature>
<feature type="repeat" description="Kelch 6">
    <location>
        <begin position="556"/>
        <end position="601"/>
    </location>
</feature>
<name>KLH20_RAT</name>
<keyword id="KW-0009">Actin-binding</keyword>
<keyword id="KW-0966">Cell projection</keyword>
<keyword id="KW-0963">Cytoplasm</keyword>
<keyword id="KW-0333">Golgi apparatus</keyword>
<keyword id="KW-0880">Kelch repeat</keyword>
<keyword id="KW-0539">Nucleus</keyword>
<keyword id="KW-0653">Protein transport</keyword>
<keyword id="KW-1185">Reference proteome</keyword>
<keyword id="KW-0677">Repeat</keyword>
<keyword id="KW-0813">Transport</keyword>
<keyword id="KW-0833">Ubl conjugation pathway</keyword>